<proteinExistence type="inferred from homology"/>
<protein>
    <recommendedName>
        <fullName evidence="1">Large ribosomal subunit protein uL15</fullName>
    </recommendedName>
    <alternativeName>
        <fullName evidence="3">50S ribosomal protein L15</fullName>
    </alternativeName>
</protein>
<evidence type="ECO:0000255" key="1">
    <source>
        <dbReference type="HAMAP-Rule" id="MF_01341"/>
    </source>
</evidence>
<evidence type="ECO:0000256" key="2">
    <source>
        <dbReference type="SAM" id="MobiDB-lite"/>
    </source>
</evidence>
<evidence type="ECO:0000305" key="3"/>
<feature type="chain" id="PRO_1000073321" description="Large ribosomal subunit protein uL15">
    <location>
        <begin position="1"/>
        <end position="144"/>
    </location>
</feature>
<feature type="region of interest" description="Disordered" evidence="2">
    <location>
        <begin position="1"/>
        <end position="57"/>
    </location>
</feature>
<feature type="compositionally biased region" description="Gly residues" evidence="2">
    <location>
        <begin position="21"/>
        <end position="31"/>
    </location>
</feature>
<feature type="compositionally biased region" description="Basic residues" evidence="2">
    <location>
        <begin position="32"/>
        <end position="44"/>
    </location>
</feature>
<comment type="function">
    <text evidence="1">Binds to the 23S rRNA.</text>
</comment>
<comment type="subunit">
    <text evidence="1">Part of the 50S ribosomal subunit.</text>
</comment>
<comment type="similarity">
    <text evidence="1">Belongs to the universal ribosomal protein uL15 family.</text>
</comment>
<gene>
    <name evidence="1" type="primary">rplO</name>
    <name type="ordered locus">VC0395_A2155</name>
    <name type="ordered locus">VC395_2690</name>
</gene>
<dbReference type="EMBL" id="CP000627">
    <property type="protein sequence ID" value="ABQ20665.1"/>
    <property type="molecule type" value="Genomic_DNA"/>
</dbReference>
<dbReference type="EMBL" id="CP001235">
    <property type="protein sequence ID" value="ACP10676.1"/>
    <property type="molecule type" value="Genomic_DNA"/>
</dbReference>
<dbReference type="RefSeq" id="WP_000926116.1">
    <property type="nucleotide sequence ID" value="NZ_JAACZH010000007.1"/>
</dbReference>
<dbReference type="SMR" id="A5F561"/>
<dbReference type="KEGG" id="vco:VC0395_A2155"/>
<dbReference type="KEGG" id="vcr:VC395_2690"/>
<dbReference type="PATRIC" id="fig|345073.21.peg.2590"/>
<dbReference type="eggNOG" id="COG0200">
    <property type="taxonomic scope" value="Bacteria"/>
</dbReference>
<dbReference type="HOGENOM" id="CLU_055188_4_2_6"/>
<dbReference type="OrthoDB" id="9810293at2"/>
<dbReference type="Proteomes" id="UP000000249">
    <property type="component" value="Chromosome 2"/>
</dbReference>
<dbReference type="GO" id="GO:0022625">
    <property type="term" value="C:cytosolic large ribosomal subunit"/>
    <property type="evidence" value="ECO:0007669"/>
    <property type="project" value="TreeGrafter"/>
</dbReference>
<dbReference type="GO" id="GO:0019843">
    <property type="term" value="F:rRNA binding"/>
    <property type="evidence" value="ECO:0007669"/>
    <property type="project" value="UniProtKB-UniRule"/>
</dbReference>
<dbReference type="GO" id="GO:0003735">
    <property type="term" value="F:structural constituent of ribosome"/>
    <property type="evidence" value="ECO:0007669"/>
    <property type="project" value="InterPro"/>
</dbReference>
<dbReference type="GO" id="GO:0006412">
    <property type="term" value="P:translation"/>
    <property type="evidence" value="ECO:0007669"/>
    <property type="project" value="UniProtKB-UniRule"/>
</dbReference>
<dbReference type="FunFam" id="3.100.10.10:FF:000003">
    <property type="entry name" value="50S ribosomal protein L15"/>
    <property type="match status" value="1"/>
</dbReference>
<dbReference type="Gene3D" id="3.100.10.10">
    <property type="match status" value="1"/>
</dbReference>
<dbReference type="HAMAP" id="MF_01341">
    <property type="entry name" value="Ribosomal_uL15"/>
    <property type="match status" value="1"/>
</dbReference>
<dbReference type="InterPro" id="IPR030878">
    <property type="entry name" value="Ribosomal_uL15"/>
</dbReference>
<dbReference type="InterPro" id="IPR021131">
    <property type="entry name" value="Ribosomal_uL15/eL18"/>
</dbReference>
<dbReference type="InterPro" id="IPR036227">
    <property type="entry name" value="Ribosomal_uL15/eL18_sf"/>
</dbReference>
<dbReference type="InterPro" id="IPR005749">
    <property type="entry name" value="Ribosomal_uL15_bac-type"/>
</dbReference>
<dbReference type="InterPro" id="IPR001196">
    <property type="entry name" value="Ribosomal_uL15_CS"/>
</dbReference>
<dbReference type="NCBIfam" id="TIGR01071">
    <property type="entry name" value="rplO_bact"/>
    <property type="match status" value="1"/>
</dbReference>
<dbReference type="PANTHER" id="PTHR12934">
    <property type="entry name" value="50S RIBOSOMAL PROTEIN L15"/>
    <property type="match status" value="1"/>
</dbReference>
<dbReference type="PANTHER" id="PTHR12934:SF11">
    <property type="entry name" value="LARGE RIBOSOMAL SUBUNIT PROTEIN UL15M"/>
    <property type="match status" value="1"/>
</dbReference>
<dbReference type="Pfam" id="PF00828">
    <property type="entry name" value="Ribosomal_L27A"/>
    <property type="match status" value="1"/>
</dbReference>
<dbReference type="SUPFAM" id="SSF52080">
    <property type="entry name" value="Ribosomal proteins L15p and L18e"/>
    <property type="match status" value="1"/>
</dbReference>
<dbReference type="PROSITE" id="PS00475">
    <property type="entry name" value="RIBOSOMAL_L15"/>
    <property type="match status" value="1"/>
</dbReference>
<keyword id="KW-0687">Ribonucleoprotein</keyword>
<keyword id="KW-0689">Ribosomal protein</keyword>
<keyword id="KW-0694">RNA-binding</keyword>
<keyword id="KW-0699">rRNA-binding</keyword>
<reference key="1">
    <citation type="submission" date="2007-03" db="EMBL/GenBank/DDBJ databases">
        <authorList>
            <person name="Heidelberg J."/>
        </authorList>
    </citation>
    <scope>NUCLEOTIDE SEQUENCE [LARGE SCALE GENOMIC DNA]</scope>
    <source>
        <strain>ATCC 39541 / Classical Ogawa 395 / O395</strain>
    </source>
</reference>
<reference key="2">
    <citation type="journal article" date="2008" name="PLoS ONE">
        <title>A recalibrated molecular clock and independent origins for the cholera pandemic clones.</title>
        <authorList>
            <person name="Feng L."/>
            <person name="Reeves P.R."/>
            <person name="Lan R."/>
            <person name="Ren Y."/>
            <person name="Gao C."/>
            <person name="Zhou Z."/>
            <person name="Ren Y."/>
            <person name="Cheng J."/>
            <person name="Wang W."/>
            <person name="Wang J."/>
            <person name="Qian W."/>
            <person name="Li D."/>
            <person name="Wang L."/>
        </authorList>
    </citation>
    <scope>NUCLEOTIDE SEQUENCE [LARGE SCALE GENOMIC DNA]</scope>
    <source>
        <strain>ATCC 39541 / Classical Ogawa 395 / O395</strain>
    </source>
</reference>
<name>RL15_VIBC3</name>
<accession>A5F561</accession>
<accession>C3LXH6</accession>
<organism>
    <name type="scientific">Vibrio cholerae serotype O1 (strain ATCC 39541 / Classical Ogawa 395 / O395)</name>
    <dbReference type="NCBI Taxonomy" id="345073"/>
    <lineage>
        <taxon>Bacteria</taxon>
        <taxon>Pseudomonadati</taxon>
        <taxon>Pseudomonadota</taxon>
        <taxon>Gammaproteobacteria</taxon>
        <taxon>Vibrionales</taxon>
        <taxon>Vibrionaceae</taxon>
        <taxon>Vibrio</taxon>
    </lineage>
</organism>
<sequence>MLLNTLSPAAGSKHAPKRLGRGVGSGLGKTGGRGHKGQKSRSGGKVRPGFEGGQMPLKQRLPKFGFTSRKSFVSAEVRLSELAKVTGDVVDLNALKAANLVTKNIEFAKIVLSGEISKAVTVKGLRVTKGAKAAIEAAGGKIEE</sequence>